<protein>
    <recommendedName>
        <fullName>Agouti-signaling protein</fullName>
        <shortName>ASP</shortName>
    </recommendedName>
    <alternativeName>
        <fullName>Agouti switch protein</fullName>
    </alternativeName>
</protein>
<feature type="signal peptide" evidence="4">
    <location>
        <begin position="1"/>
        <end position="22"/>
    </location>
</feature>
<feature type="chain" id="PRO_0000323398" description="Agouti-signaling protein">
    <location>
        <begin position="23"/>
        <end position="132"/>
    </location>
</feature>
<feature type="domain" description="Agouti" evidence="5">
    <location>
        <begin position="93"/>
        <end position="132"/>
    </location>
</feature>
<feature type="region of interest" description="Disordered" evidence="6">
    <location>
        <begin position="61"/>
        <end position="87"/>
    </location>
</feature>
<feature type="compositionally biased region" description="Basic and acidic residues" evidence="6">
    <location>
        <begin position="63"/>
        <end position="79"/>
    </location>
</feature>
<feature type="glycosylation site" description="N-linked (GlcNAc...) asparagine" evidence="4">
    <location>
        <position position="39"/>
    </location>
</feature>
<feature type="disulfide bond" evidence="5">
    <location>
        <begin position="93"/>
        <end position="108"/>
    </location>
</feature>
<feature type="disulfide bond" evidence="5">
    <location>
        <begin position="100"/>
        <end position="114"/>
    </location>
</feature>
<feature type="disulfide bond" evidence="5">
    <location>
        <begin position="107"/>
        <end position="125"/>
    </location>
</feature>
<feature type="disulfide bond" evidence="5">
    <location>
        <begin position="111"/>
        <end position="132"/>
    </location>
</feature>
<feature type="disulfide bond" evidence="5">
    <location>
        <begin position="116"/>
        <end position="123"/>
    </location>
</feature>
<proteinExistence type="inferred from homology"/>
<gene>
    <name type="primary">ASIP</name>
</gene>
<dbReference type="EMBL" id="AB299216">
    <property type="protein sequence ID" value="BAF80800.1"/>
    <property type="molecule type" value="Genomic_DNA"/>
</dbReference>
<dbReference type="GlyCosmos" id="A8CEM8">
    <property type="glycosylation" value="1 site, No reported glycans"/>
</dbReference>
<dbReference type="GO" id="GO:0005615">
    <property type="term" value="C:extracellular space"/>
    <property type="evidence" value="ECO:0000250"/>
    <property type="project" value="UniProtKB"/>
</dbReference>
<dbReference type="GO" id="GO:0031779">
    <property type="term" value="F:melanocortin receptor binding"/>
    <property type="evidence" value="ECO:0007669"/>
    <property type="project" value="TreeGrafter"/>
</dbReference>
<dbReference type="GO" id="GO:0005184">
    <property type="term" value="F:neuropeptide hormone activity"/>
    <property type="evidence" value="ECO:0007669"/>
    <property type="project" value="TreeGrafter"/>
</dbReference>
<dbReference type="GO" id="GO:0009755">
    <property type="term" value="P:hormone-mediated signaling pathway"/>
    <property type="evidence" value="ECO:0007669"/>
    <property type="project" value="InterPro"/>
</dbReference>
<dbReference type="GO" id="GO:0042438">
    <property type="term" value="P:melanin biosynthetic process"/>
    <property type="evidence" value="ECO:0000250"/>
    <property type="project" value="UniProtKB"/>
</dbReference>
<dbReference type="GO" id="GO:0032438">
    <property type="term" value="P:melanosome organization"/>
    <property type="evidence" value="ECO:0007669"/>
    <property type="project" value="TreeGrafter"/>
</dbReference>
<dbReference type="FunFam" id="4.10.760.10:FF:000002">
    <property type="entry name" value="Agouti-signaling protein"/>
    <property type="match status" value="1"/>
</dbReference>
<dbReference type="Gene3D" id="4.10.760.10">
    <property type="entry name" value="Agouti domain"/>
    <property type="match status" value="1"/>
</dbReference>
<dbReference type="InterPro" id="IPR007733">
    <property type="entry name" value="Agouti"/>
</dbReference>
<dbReference type="InterPro" id="IPR027300">
    <property type="entry name" value="Agouti_dom"/>
</dbReference>
<dbReference type="InterPro" id="IPR036836">
    <property type="entry name" value="Agouti_dom_sf"/>
</dbReference>
<dbReference type="PANTHER" id="PTHR16551">
    <property type="entry name" value="AGOUTI RELATED"/>
    <property type="match status" value="1"/>
</dbReference>
<dbReference type="PANTHER" id="PTHR16551:SF1">
    <property type="entry name" value="AGOUTI-SIGNALING PROTEIN"/>
    <property type="match status" value="1"/>
</dbReference>
<dbReference type="Pfam" id="PF05039">
    <property type="entry name" value="Agouti"/>
    <property type="match status" value="1"/>
</dbReference>
<dbReference type="SMART" id="SM00792">
    <property type="entry name" value="Agouti"/>
    <property type="match status" value="1"/>
</dbReference>
<dbReference type="SUPFAM" id="SSF57055">
    <property type="entry name" value="Agouti-related protein"/>
    <property type="match status" value="1"/>
</dbReference>
<dbReference type="PROSITE" id="PS60024">
    <property type="entry name" value="AGOUTI_1"/>
    <property type="match status" value="1"/>
</dbReference>
<dbReference type="PROSITE" id="PS51150">
    <property type="entry name" value="AGOUTI_2"/>
    <property type="match status" value="1"/>
</dbReference>
<evidence type="ECO:0000250" key="1"/>
<evidence type="ECO:0000250" key="2">
    <source>
        <dbReference type="UniProtKB" id="P42127"/>
    </source>
</evidence>
<evidence type="ECO:0000250" key="3">
    <source>
        <dbReference type="UniProtKB" id="Q03288"/>
    </source>
</evidence>
<evidence type="ECO:0000255" key="4"/>
<evidence type="ECO:0000255" key="5">
    <source>
        <dbReference type="PROSITE-ProRule" id="PRU00494"/>
    </source>
</evidence>
<evidence type="ECO:0000256" key="6">
    <source>
        <dbReference type="SAM" id="MobiDB-lite"/>
    </source>
</evidence>
<reference key="1">
    <citation type="submission" date="2007-03" db="EMBL/GenBank/DDBJ databases">
        <title>Association of the agouti signaling protein gene with coat color variation in the macaques.</title>
        <authorList>
            <person name="Nakayama K."/>
            <person name="Shotake T."/>
            <person name="Takenaka O."/>
            <person name="Ishida T."/>
        </authorList>
    </citation>
    <scope>NUCLEOTIDE SEQUENCE [GENOMIC DNA]</scope>
</reference>
<keyword id="KW-1015">Disulfide bond</keyword>
<keyword id="KW-0325">Glycoprotein</keyword>
<keyword id="KW-0960">Knottin</keyword>
<keyword id="KW-0964">Secreted</keyword>
<keyword id="KW-0732">Signal</keyword>
<name>ASIP_MACSL</name>
<comment type="function">
    <text evidence="3">Involved in the regulation of melanogenesis. The binding of ASP to MC1R precludes alpha-MSH initiated signaling and thus blocks production of cAMP, leading to a down-regulation of eumelanogenesis (brown/black pigment) and thus increasing synthesis of pheomelanin (yellow/red pigment) (By similarity).</text>
</comment>
<comment type="subcellular location">
    <subcellularLocation>
        <location evidence="2">Secreted</location>
    </subcellularLocation>
</comment>
<comment type="domain">
    <text evidence="1">The presence of a 'disulfide through disulfide knot' structurally defines this protein as a knottin.</text>
</comment>
<sequence>MDVTRLLLATLLVFLCFFTAYSHPPPEEKLRDDRSLRSNSSVNLLDFPSVSIVALNKNSKQISRKEAEKKRSSKKEASMKKVARPRTPLSAPCVTTRDSCKPPAPACCDPCASCQCRFFRSACSCRVLSLNC</sequence>
<accession>A8CEM8</accession>
<organism>
    <name type="scientific">Macaca silenus</name>
    <name type="common">Lion-tailed macaque</name>
    <dbReference type="NCBI Taxonomy" id="54601"/>
    <lineage>
        <taxon>Eukaryota</taxon>
        <taxon>Metazoa</taxon>
        <taxon>Chordata</taxon>
        <taxon>Craniata</taxon>
        <taxon>Vertebrata</taxon>
        <taxon>Euteleostomi</taxon>
        <taxon>Mammalia</taxon>
        <taxon>Eutheria</taxon>
        <taxon>Euarchontoglires</taxon>
        <taxon>Primates</taxon>
        <taxon>Haplorrhini</taxon>
        <taxon>Catarrhini</taxon>
        <taxon>Cercopithecidae</taxon>
        <taxon>Cercopithecinae</taxon>
        <taxon>Macaca</taxon>
    </lineage>
</organism>